<dbReference type="EC" id="1.14.11.-" evidence="7"/>
<dbReference type="EMBL" id="AF155773">
    <property type="protein sequence ID" value="AAG27129.1"/>
    <property type="molecule type" value="Genomic_DNA"/>
</dbReference>
<dbReference type="EMBL" id="CM000578">
    <property type="protein sequence ID" value="EWG36197.1"/>
    <property type="molecule type" value="Genomic_DNA"/>
</dbReference>
<dbReference type="RefSeq" id="XP_018742388.1">
    <property type="nucleotide sequence ID" value="XM_018886756.1"/>
</dbReference>
<dbReference type="SMR" id="W7LUF3"/>
<dbReference type="STRING" id="334819.W7LUF3"/>
<dbReference type="EnsemblFungi" id="FVEG_00319T0">
    <property type="protein sequence ID" value="FVEG_00319T0"/>
    <property type="gene ID" value="FVEG_00319"/>
</dbReference>
<dbReference type="GeneID" id="30058696"/>
<dbReference type="KEGG" id="fvr:FVEG_00319"/>
<dbReference type="VEuPathDB" id="FungiDB:FVEG_00319"/>
<dbReference type="eggNOG" id="KOG3857">
    <property type="taxonomic scope" value="Eukaryota"/>
</dbReference>
<dbReference type="HOGENOM" id="CLU_007207_0_2_1"/>
<dbReference type="OMA" id="HGRICAI"/>
<dbReference type="OrthoDB" id="29996at110618"/>
<dbReference type="Proteomes" id="UP000009096">
    <property type="component" value="Chromosome 1"/>
</dbReference>
<dbReference type="GO" id="GO:0005739">
    <property type="term" value="C:mitochondrion"/>
    <property type="evidence" value="ECO:0007669"/>
    <property type="project" value="TreeGrafter"/>
</dbReference>
<dbReference type="GO" id="GO:0004022">
    <property type="term" value="F:alcohol dehydrogenase (NAD+) activity"/>
    <property type="evidence" value="ECO:0007669"/>
    <property type="project" value="TreeGrafter"/>
</dbReference>
<dbReference type="GO" id="GO:0046872">
    <property type="term" value="F:metal ion binding"/>
    <property type="evidence" value="ECO:0007669"/>
    <property type="project" value="InterPro"/>
</dbReference>
<dbReference type="GO" id="GO:1900541">
    <property type="term" value="P:fumonisin biosynthetic process"/>
    <property type="evidence" value="ECO:0000315"/>
    <property type="project" value="GO_Central"/>
</dbReference>
<dbReference type="CDD" id="cd08192">
    <property type="entry name" value="MAR-like"/>
    <property type="match status" value="1"/>
</dbReference>
<dbReference type="Gene3D" id="3.40.50.1970">
    <property type="match status" value="1"/>
</dbReference>
<dbReference type="Gene3D" id="1.20.1090.10">
    <property type="entry name" value="Dehydroquinate synthase-like - alpha domain"/>
    <property type="match status" value="1"/>
</dbReference>
<dbReference type="InterPro" id="IPR001670">
    <property type="entry name" value="ADH_Fe/GldA"/>
</dbReference>
<dbReference type="InterPro" id="IPR056798">
    <property type="entry name" value="ADH_Fe_C"/>
</dbReference>
<dbReference type="InterPro" id="IPR039697">
    <property type="entry name" value="Alcohol_dehydrogenase_Fe"/>
</dbReference>
<dbReference type="PANTHER" id="PTHR11496">
    <property type="entry name" value="ALCOHOL DEHYDROGENASE"/>
    <property type="match status" value="1"/>
</dbReference>
<dbReference type="PANTHER" id="PTHR11496:SF107">
    <property type="entry name" value="ALCOHOL DEHYDROGENASE, PUTATIVE (AFU_ORTHOLOGUE AFUA_1G06800)-RELATED"/>
    <property type="match status" value="1"/>
</dbReference>
<dbReference type="Pfam" id="PF25137">
    <property type="entry name" value="ADH_Fe_C"/>
    <property type="match status" value="1"/>
</dbReference>
<dbReference type="Pfam" id="PF00465">
    <property type="entry name" value="Fe-ADH"/>
    <property type="match status" value="1"/>
</dbReference>
<dbReference type="SUPFAM" id="SSF56796">
    <property type="entry name" value="Dehydroquinate synthase-like"/>
    <property type="match status" value="1"/>
</dbReference>
<organism>
    <name type="scientific">Gibberella moniliformis (strain M3125 / FGSC 7600)</name>
    <name type="common">Maize ear and stalk rot fungus</name>
    <name type="synonym">Fusarium verticillioides</name>
    <dbReference type="NCBI Taxonomy" id="334819"/>
    <lineage>
        <taxon>Eukaryota</taxon>
        <taxon>Fungi</taxon>
        <taxon>Dikarya</taxon>
        <taxon>Ascomycota</taxon>
        <taxon>Pezizomycotina</taxon>
        <taxon>Sordariomycetes</taxon>
        <taxon>Hypocreomycetidae</taxon>
        <taxon>Hypocreales</taxon>
        <taxon>Nectriaceae</taxon>
        <taxon>Fusarium</taxon>
        <taxon>Fusarium fujikuroi species complex</taxon>
    </lineage>
</organism>
<gene>
    <name evidence="4" type="primary">FUM7</name>
    <name type="ORF">FVEG_00319</name>
</gene>
<protein>
    <recommendedName>
        <fullName evidence="5">Dehydrogenase FUM7</fullName>
        <ecNumber evidence="7">1.14.11.-</ecNumber>
    </recommendedName>
    <alternativeName>
        <fullName evidence="4">Fumonisin biosynthesis cluster protein 7</fullName>
    </alternativeName>
</protein>
<evidence type="ECO:0000269" key="1">
    <source>
    </source>
</evidence>
<evidence type="ECO:0000269" key="2">
    <source>
    </source>
</evidence>
<evidence type="ECO:0000269" key="3">
    <source>
    </source>
</evidence>
<evidence type="ECO:0000303" key="4">
    <source>
    </source>
</evidence>
<evidence type="ECO:0000303" key="5">
    <source>
    </source>
</evidence>
<evidence type="ECO:0000305" key="6"/>
<evidence type="ECO:0000305" key="7">
    <source>
    </source>
</evidence>
<evidence type="ECO:0000305" key="8">
    <source>
    </source>
</evidence>
<reference key="1">
    <citation type="journal article" date="2001" name="Fungal Genet. Biol.">
        <title>Characterization of four clustered and coregulated genes associated with fumonisin biosynthesis in Fusarium verticillioides.</title>
        <authorList>
            <person name="Seo J.A."/>
            <person name="Proctor R.H."/>
            <person name="Plattner R.D."/>
        </authorList>
    </citation>
    <scope>NUCLEOTIDE SEQUENCE [GENOMIC DNA]</scope>
    <scope>INDUCTION</scope>
    <scope>PATHWAY</scope>
    <source>
        <strain>M3125 / FGSC 7600</strain>
    </source>
</reference>
<reference key="2">
    <citation type="journal article" date="2003" name="Fungal Genet. Biol.">
        <title>Co-expression of 15 contiguous genes delineates a fumonisin biosynthetic gene cluster in Gibberella moniliformis.</title>
        <authorList>
            <person name="Proctor R.H."/>
            <person name="Brown D.W."/>
            <person name="Plattner R.D."/>
            <person name="Desjardins A.E."/>
        </authorList>
    </citation>
    <scope>NUCLEOTIDE SEQUENCE [GENOMIC DNA]</scope>
    <scope>PATHWAY</scope>
    <source>
        <strain>M3125 / FGSC 7600</strain>
    </source>
</reference>
<reference key="3">
    <citation type="journal article" date="2010" name="Nature">
        <title>Comparative genomics reveals mobile pathogenicity chromosomes in Fusarium.</title>
        <authorList>
            <person name="Ma L.-J."/>
            <person name="van der Does H.C."/>
            <person name="Borkovich K.A."/>
            <person name="Coleman J.J."/>
            <person name="Daboussi M.-J."/>
            <person name="Di Pietro A."/>
            <person name="Dufresne M."/>
            <person name="Freitag M."/>
            <person name="Grabherr M."/>
            <person name="Henrissat B."/>
            <person name="Houterman P.M."/>
            <person name="Kang S."/>
            <person name="Shim W.-B."/>
            <person name="Woloshuk C."/>
            <person name="Xie X."/>
            <person name="Xu J.-R."/>
            <person name="Antoniw J."/>
            <person name="Baker S.E."/>
            <person name="Bluhm B.H."/>
            <person name="Breakspear A."/>
            <person name="Brown D.W."/>
            <person name="Butchko R.A.E."/>
            <person name="Chapman S."/>
            <person name="Coulson R."/>
            <person name="Coutinho P.M."/>
            <person name="Danchin E.G.J."/>
            <person name="Diener A."/>
            <person name="Gale L.R."/>
            <person name="Gardiner D.M."/>
            <person name="Goff S."/>
            <person name="Hammond-Kosack K.E."/>
            <person name="Hilburn K."/>
            <person name="Hua-Van A."/>
            <person name="Jonkers W."/>
            <person name="Kazan K."/>
            <person name="Kodira C.D."/>
            <person name="Koehrsen M."/>
            <person name="Kumar L."/>
            <person name="Lee Y.-H."/>
            <person name="Li L."/>
            <person name="Manners J.M."/>
            <person name="Miranda-Saavedra D."/>
            <person name="Mukherjee M."/>
            <person name="Park G."/>
            <person name="Park J."/>
            <person name="Park S.-Y."/>
            <person name="Proctor R.H."/>
            <person name="Regev A."/>
            <person name="Ruiz-Roldan M.C."/>
            <person name="Sain D."/>
            <person name="Sakthikumar S."/>
            <person name="Sykes S."/>
            <person name="Schwartz D.C."/>
            <person name="Turgeon B.G."/>
            <person name="Wapinski I."/>
            <person name="Yoder O."/>
            <person name="Young S."/>
            <person name="Zeng Q."/>
            <person name="Zhou S."/>
            <person name="Galagan J."/>
            <person name="Cuomo C.A."/>
            <person name="Kistler H.C."/>
            <person name="Rep M."/>
        </authorList>
    </citation>
    <scope>NUCLEOTIDE SEQUENCE [LARGE SCALE GENOMIC DNA]</scope>
    <source>
        <strain>M3125 / FGSC 7600</strain>
    </source>
</reference>
<reference key="4">
    <citation type="journal article" date="2006" name="J. Agric. Food Chem.">
        <title>Deletion analysis of FUM genes involved in tricarballylic ester formation during fumonisin biosynthesis.</title>
        <authorList>
            <person name="Butchko R.A."/>
            <person name="Plattner R.D."/>
            <person name="Proctor R.H."/>
        </authorList>
    </citation>
    <scope>FUNCTION</scope>
    <scope>DISRUPTION PHENOTYPE</scope>
    <scope>PATHWAY</scope>
</reference>
<accession>W7LUF3</accession>
<accession>Q9HGD9</accession>
<feature type="chain" id="PRO_0000441146" description="Dehydrogenase FUM7">
    <location>
        <begin position="1"/>
        <end position="424"/>
    </location>
</feature>
<proteinExistence type="evidence at transcript level"/>
<keyword id="KW-0408">Iron</keyword>
<keyword id="KW-0520">NAD</keyword>
<keyword id="KW-0560">Oxidoreductase</keyword>
<keyword id="KW-1185">Reference proteome</keyword>
<comment type="function">
    <text evidence="1 2 3 8">Dehydrogenase; part of the gene cluster that mediates the biosynthesis of fumonisins B1 (FB1), B2 (FB2), B3 (FB3), and B4 (FB4), which are carcinogenic mycotoxins (PubMed:11728154, PubMed:12620260, PubMed:17147424). Within the pathway, FUM7 is involved the addition of the tricarballylic moieties to the carbon backbone. FUM7 dehydrogenase removes the C-3 hydroxyl of citrate to form tricarballylic acid either before or after the CoA activation by the FUM10 acyl-CoA synthetase and FUM14 catalyzed esterification of CoA-activated tricarballylic acid to the C-14 and C-15 hydroxyls of the fumonisin backbone (PubMed:17147424). The biosynthesis starts with the FUM1-catalyzed carbon chain assembly from one molecule of acetyl-CoA, eight molecules of malonyl-CoA, and two molecules of methionine (in S-adenosyl form). The C18 polyketide chain is released from the enzyme by a nucleophilic attack of a carbanion, which is derived from R-carbon of alanine by decarboxylation, on the carbonyl carbon of polyketide acyl chain. This step is catalyzed by the pyridoxal 5'-phosphate-dependent aminoacyl transferase FUM8. The resultant 3-keto intermediate is then stereospecifically reduced to a 3-hydroxyl product by reductase FUM13. Subsequent oxidations at C-10 by the cytochrome P450 monooxygenase FUM2, C-14 and C-15 by FUM6, FUM12 or FUM15, tricarballylic esterification of the hydroxyl groups on C-14 and C-15 by acyltransferase FUM14, and C-5 hydroxylation by 2-keto-glutarate-dependent dioxygenase FUM3 furnish the biosynthesis of fumonisins. The tricarballylic moieties are most likely derived from the citric acid cycle, and their addition to the carbon backbone may involve FUM7, FUM10, FUM11 and FUM14 (Probable).</text>
</comment>
<comment type="cofactor">
    <cofactor evidence="6">
        <name>Fe cation</name>
        <dbReference type="ChEBI" id="CHEBI:24875"/>
    </cofactor>
</comment>
<comment type="pathway">
    <text evidence="1 2 3">Mycotoxin biosynthesis.</text>
</comment>
<comment type="induction">
    <text evidence="1">Expression correlates with fuminisins production (PubMed:11728154).</text>
</comment>
<comment type="disruption phenotype">
    <text evidence="3">Impairs the production of fumonisins but accumaulates the intermediate tetradehydro-fumonisin B1 (PubMed:17147424).</text>
</comment>
<comment type="similarity">
    <text evidence="6">Belongs to the iron-containing alcohol dehydrogenase family.</text>
</comment>
<sequence>MSLDHHQFHQANSRNSKPYISYGIPFWRACAHHAKALNSHRIYIVASRSLSRSQALEDLKNALGLIHIVGEYNGIAQHTPWEQVFGLLRDLRQTQADLIITLGGGSVTDGVKLARLLAANNVTTLEQADSLLSHCEPGKPKPSDETVQPASIPVINVPTTLSGAEFTRAAGATNTQSDHKKRIIIHQSMYADIVVLDPELSLGTPARFWFSTGIRAVDHFVEGIYGNMATTMVQGDNSGSDQLIIEKDIQASLGALLVALLHTKDDWQNCDARLRQMLALKDCPRAGHNGVGASHGIGHQLGPFGVGHGETSCIILPCVLKYNWSHGDARLRAKLQLITDVFWGNAVLTKLLVDRGLHPQDTDPGDVIAAYISALGMPNSLAKYGIHEAQFHQIAENAMEDVCTQVNPVELDKNKVVEILYMAA</sequence>
<name>FUM7_GIBM7</name>